<gene>
    <name evidence="1" type="primary">Tasl</name>
</gene>
<feature type="chain" id="PRO_0000251253" description="TLR adapter interacting with SLC15A4 on the lysosome">
    <location>
        <begin position="1"/>
        <end position="298"/>
    </location>
</feature>
<feature type="short sequence motif" description="pLxIS motif" evidence="1">
    <location>
        <begin position="287"/>
        <end position="291"/>
    </location>
</feature>
<feature type="modified residue" description="Phosphoserine" evidence="1">
    <location>
        <position position="291"/>
    </location>
</feature>
<comment type="function">
    <text evidence="1">Innate immune adapter that mediates the recruitment and activation of IRF5 downstream of endolysosomal toll-like receptors TLR7, TLR8 and TLR9. Following recruitment to endolysosome by SLC15A4 downstream of TLR7, TLR8 and TLR9, specifically recruits IRF5 transcription factor via its pLxIS motif, leading to IRF5 activation and subsequent expression of type I interferons. Plays a role in the regulation of endolysosomal pH in immune cells such as B-cells, dendritic cells and monocytes.</text>
</comment>
<comment type="subunit">
    <text evidence="1">Interacts (via pLxIS motif) with IRF5; leading to IRF5 activation. Interacts with SLC15A4; leading to its recruitment to endolysosome.</text>
</comment>
<comment type="subcellular location">
    <subcellularLocation>
        <location evidence="1">Lysosome membrane</location>
    </subcellularLocation>
    <subcellularLocation>
        <location evidence="1">Endosome membrane</location>
    </subcellularLocation>
    <subcellularLocation>
        <location evidence="1">Nucleus</location>
    </subcellularLocation>
    <subcellularLocation>
        <location evidence="1">Cytoplasm</location>
    </subcellularLocation>
    <text evidence="1">Recruited to endolysosome following interaction with SLC15A4. May colocalize with TLR7 in the endosomal pathway.</text>
</comment>
<comment type="domain">
    <text evidence="1">The pLxIS motif constitutes an IRF5-binding motif: following phosphorylation, the phosphorylated pLxIS motif of TASL recruits IRF5.</text>
</comment>
<comment type="PTM">
    <text evidence="1">The phosphorylated pLxIS motif constitutes an IRF5-binding motif, leading to recruitment of the transcription factor IRF5 to induce type-I interferons and other cytokines.</text>
</comment>
<keyword id="KW-0963">Cytoplasm</keyword>
<keyword id="KW-0967">Endosome</keyword>
<keyword id="KW-0391">Immunity</keyword>
<keyword id="KW-0399">Innate immunity</keyword>
<keyword id="KW-0458">Lysosome</keyword>
<keyword id="KW-0472">Membrane</keyword>
<keyword id="KW-0539">Nucleus</keyword>
<keyword id="KW-0597">Phosphoprotein</keyword>
<keyword id="KW-1185">Reference proteome</keyword>
<evidence type="ECO:0000250" key="1">
    <source>
        <dbReference type="UniProtKB" id="Q9HAI6"/>
    </source>
</evidence>
<proteinExistence type="evidence at transcript level"/>
<sequence length="298" mass="33057">MLSEGYLSGLTYWNDIHWNCASYNEPVAGDQGKETSSVAALSYSSVDETQVQSLYVSCKSSGKFISSVHARASQHSRSQSRTVLQANSNPVFESPTLAAVGICRDVIRETYLVPPSCKSICKNYNDLHIAGGQVMAINSVMANFPSESSFEDGPLLKSSEISLSMEDSTSTQLTELPLKPIQRYSSYWRITSIKEKSSLQMQKPISNAVLNEYLEQKVVELYKQYIMDTVFHDSSPTQILASEFIMTNVDQISLQVSKEKNLDTSKVKDIVISHLLQLVSSEISTPSLHISQYSNITP</sequence>
<accession>Q9D3J9</accession>
<name>TASL_MOUSE</name>
<reference key="1">
    <citation type="journal article" date="2005" name="Science">
        <title>The transcriptional landscape of the mammalian genome.</title>
        <authorList>
            <person name="Carninci P."/>
            <person name="Kasukawa T."/>
            <person name="Katayama S."/>
            <person name="Gough J."/>
            <person name="Frith M.C."/>
            <person name="Maeda N."/>
            <person name="Oyama R."/>
            <person name="Ravasi T."/>
            <person name="Lenhard B."/>
            <person name="Wells C."/>
            <person name="Kodzius R."/>
            <person name="Shimokawa K."/>
            <person name="Bajic V.B."/>
            <person name="Brenner S.E."/>
            <person name="Batalov S."/>
            <person name="Forrest A.R."/>
            <person name="Zavolan M."/>
            <person name="Davis M.J."/>
            <person name="Wilming L.G."/>
            <person name="Aidinis V."/>
            <person name="Allen J.E."/>
            <person name="Ambesi-Impiombato A."/>
            <person name="Apweiler R."/>
            <person name="Aturaliya R.N."/>
            <person name="Bailey T.L."/>
            <person name="Bansal M."/>
            <person name="Baxter L."/>
            <person name="Beisel K.W."/>
            <person name="Bersano T."/>
            <person name="Bono H."/>
            <person name="Chalk A.M."/>
            <person name="Chiu K.P."/>
            <person name="Choudhary V."/>
            <person name="Christoffels A."/>
            <person name="Clutterbuck D.R."/>
            <person name="Crowe M.L."/>
            <person name="Dalla E."/>
            <person name="Dalrymple B.P."/>
            <person name="de Bono B."/>
            <person name="Della Gatta G."/>
            <person name="di Bernardo D."/>
            <person name="Down T."/>
            <person name="Engstrom P."/>
            <person name="Fagiolini M."/>
            <person name="Faulkner G."/>
            <person name="Fletcher C.F."/>
            <person name="Fukushima T."/>
            <person name="Furuno M."/>
            <person name="Futaki S."/>
            <person name="Gariboldi M."/>
            <person name="Georgii-Hemming P."/>
            <person name="Gingeras T.R."/>
            <person name="Gojobori T."/>
            <person name="Green R.E."/>
            <person name="Gustincich S."/>
            <person name="Harbers M."/>
            <person name="Hayashi Y."/>
            <person name="Hensch T.K."/>
            <person name="Hirokawa N."/>
            <person name="Hill D."/>
            <person name="Huminiecki L."/>
            <person name="Iacono M."/>
            <person name="Ikeo K."/>
            <person name="Iwama A."/>
            <person name="Ishikawa T."/>
            <person name="Jakt M."/>
            <person name="Kanapin A."/>
            <person name="Katoh M."/>
            <person name="Kawasawa Y."/>
            <person name="Kelso J."/>
            <person name="Kitamura H."/>
            <person name="Kitano H."/>
            <person name="Kollias G."/>
            <person name="Krishnan S.P."/>
            <person name="Kruger A."/>
            <person name="Kummerfeld S.K."/>
            <person name="Kurochkin I.V."/>
            <person name="Lareau L.F."/>
            <person name="Lazarevic D."/>
            <person name="Lipovich L."/>
            <person name="Liu J."/>
            <person name="Liuni S."/>
            <person name="McWilliam S."/>
            <person name="Madan Babu M."/>
            <person name="Madera M."/>
            <person name="Marchionni L."/>
            <person name="Matsuda H."/>
            <person name="Matsuzawa S."/>
            <person name="Miki H."/>
            <person name="Mignone F."/>
            <person name="Miyake S."/>
            <person name="Morris K."/>
            <person name="Mottagui-Tabar S."/>
            <person name="Mulder N."/>
            <person name="Nakano N."/>
            <person name="Nakauchi H."/>
            <person name="Ng P."/>
            <person name="Nilsson R."/>
            <person name="Nishiguchi S."/>
            <person name="Nishikawa S."/>
            <person name="Nori F."/>
            <person name="Ohara O."/>
            <person name="Okazaki Y."/>
            <person name="Orlando V."/>
            <person name="Pang K.C."/>
            <person name="Pavan W.J."/>
            <person name="Pavesi G."/>
            <person name="Pesole G."/>
            <person name="Petrovsky N."/>
            <person name="Piazza S."/>
            <person name="Reed J."/>
            <person name="Reid J.F."/>
            <person name="Ring B.Z."/>
            <person name="Ringwald M."/>
            <person name="Rost B."/>
            <person name="Ruan Y."/>
            <person name="Salzberg S.L."/>
            <person name="Sandelin A."/>
            <person name="Schneider C."/>
            <person name="Schoenbach C."/>
            <person name="Sekiguchi K."/>
            <person name="Semple C.A."/>
            <person name="Seno S."/>
            <person name="Sessa L."/>
            <person name="Sheng Y."/>
            <person name="Shibata Y."/>
            <person name="Shimada H."/>
            <person name="Shimada K."/>
            <person name="Silva D."/>
            <person name="Sinclair B."/>
            <person name="Sperling S."/>
            <person name="Stupka E."/>
            <person name="Sugiura K."/>
            <person name="Sultana R."/>
            <person name="Takenaka Y."/>
            <person name="Taki K."/>
            <person name="Tammoja K."/>
            <person name="Tan S.L."/>
            <person name="Tang S."/>
            <person name="Taylor M.S."/>
            <person name="Tegner J."/>
            <person name="Teichmann S.A."/>
            <person name="Ueda H.R."/>
            <person name="van Nimwegen E."/>
            <person name="Verardo R."/>
            <person name="Wei C.L."/>
            <person name="Yagi K."/>
            <person name="Yamanishi H."/>
            <person name="Zabarovsky E."/>
            <person name="Zhu S."/>
            <person name="Zimmer A."/>
            <person name="Hide W."/>
            <person name="Bult C."/>
            <person name="Grimmond S.M."/>
            <person name="Teasdale R.D."/>
            <person name="Liu E.T."/>
            <person name="Brusic V."/>
            <person name="Quackenbush J."/>
            <person name="Wahlestedt C."/>
            <person name="Mattick J.S."/>
            <person name="Hume D.A."/>
            <person name="Kai C."/>
            <person name="Sasaki D."/>
            <person name="Tomaru Y."/>
            <person name="Fukuda S."/>
            <person name="Kanamori-Katayama M."/>
            <person name="Suzuki M."/>
            <person name="Aoki J."/>
            <person name="Arakawa T."/>
            <person name="Iida J."/>
            <person name="Imamura K."/>
            <person name="Itoh M."/>
            <person name="Kato T."/>
            <person name="Kawaji H."/>
            <person name="Kawagashira N."/>
            <person name="Kawashima T."/>
            <person name="Kojima M."/>
            <person name="Kondo S."/>
            <person name="Konno H."/>
            <person name="Nakano K."/>
            <person name="Ninomiya N."/>
            <person name="Nishio T."/>
            <person name="Okada M."/>
            <person name="Plessy C."/>
            <person name="Shibata K."/>
            <person name="Shiraki T."/>
            <person name="Suzuki S."/>
            <person name="Tagami M."/>
            <person name="Waki K."/>
            <person name="Watahiki A."/>
            <person name="Okamura-Oho Y."/>
            <person name="Suzuki H."/>
            <person name="Kawai J."/>
            <person name="Hayashizaki Y."/>
        </authorList>
    </citation>
    <scope>NUCLEOTIDE SEQUENCE [LARGE SCALE MRNA]</scope>
    <source>
        <strain>C57BL/6J</strain>
        <tissue>Dendritic cell</tissue>
        <tissue>Head</tissue>
    </source>
</reference>
<reference key="2">
    <citation type="journal article" date="2004" name="Genome Res.">
        <title>The status, quality, and expansion of the NIH full-length cDNA project: the Mammalian Gene Collection (MGC).</title>
        <authorList>
            <consortium name="The MGC Project Team"/>
        </authorList>
    </citation>
    <scope>NUCLEOTIDE SEQUENCE [LARGE SCALE MRNA]</scope>
</reference>
<protein>
    <recommendedName>
        <fullName evidence="1">TLR adapter interacting with SLC15A4 on the lysosome</fullName>
    </recommendedName>
</protein>
<dbReference type="EMBL" id="AK017351">
    <property type="protein sequence ID" value="BAB30703.1"/>
    <property type="molecule type" value="mRNA"/>
</dbReference>
<dbReference type="EMBL" id="AK155591">
    <property type="protein sequence ID" value="BAE33338.1"/>
    <property type="molecule type" value="mRNA"/>
</dbReference>
<dbReference type="EMBL" id="BC115577">
    <property type="protein sequence ID" value="AAI15578.1"/>
    <property type="molecule type" value="mRNA"/>
</dbReference>
<dbReference type="CCDS" id="CCDS53127.1"/>
<dbReference type="RefSeq" id="NP_001157011.1">
    <property type="nucleotide sequence ID" value="NM_001163539.1"/>
</dbReference>
<dbReference type="RefSeq" id="XP_011245984.1">
    <property type="nucleotide sequence ID" value="XM_011247682.3"/>
</dbReference>
<dbReference type="RefSeq" id="XP_017174109.1">
    <property type="nucleotide sequence ID" value="XM_017318620.3"/>
</dbReference>
<dbReference type="BioGRID" id="214685">
    <property type="interactions" value="1"/>
</dbReference>
<dbReference type="FunCoup" id="Q9D3J9">
    <property type="interactions" value="726"/>
</dbReference>
<dbReference type="STRING" id="10090.ENSMUSP00000109609"/>
<dbReference type="iPTMnet" id="Q9D3J9"/>
<dbReference type="PhosphoSitePlus" id="Q9D3J9"/>
<dbReference type="PaxDb" id="10090-ENSMUSP00000109609"/>
<dbReference type="Antibodypedia" id="379">
    <property type="antibodies" value="83 antibodies from 14 providers"/>
</dbReference>
<dbReference type="Ensembl" id="ENSMUST00000113976.2">
    <property type="protein sequence ID" value="ENSMUSP00000109609.2"/>
    <property type="gene ID" value="ENSMUSG00000025058.5"/>
</dbReference>
<dbReference type="GeneID" id="71398"/>
<dbReference type="KEGG" id="mmu:71398"/>
<dbReference type="UCSC" id="uc009trz.2">
    <property type="organism name" value="mouse"/>
</dbReference>
<dbReference type="AGR" id="MGI:1918648"/>
<dbReference type="CTD" id="80231"/>
<dbReference type="MGI" id="MGI:1918648">
    <property type="gene designation" value="Tasl"/>
</dbReference>
<dbReference type="VEuPathDB" id="HostDB:ENSMUSG00000025058"/>
<dbReference type="eggNOG" id="ENOG502QTA8">
    <property type="taxonomic scope" value="Eukaryota"/>
</dbReference>
<dbReference type="GeneTree" id="ENSGT00390000011425"/>
<dbReference type="HOGENOM" id="CLU_081014_0_0_1"/>
<dbReference type="InParanoid" id="Q9D3J9"/>
<dbReference type="OMA" id="MFHDSSP"/>
<dbReference type="OrthoDB" id="9892060at2759"/>
<dbReference type="PhylomeDB" id="Q9D3J9"/>
<dbReference type="TreeFam" id="TF335550"/>
<dbReference type="Reactome" id="R-MMU-9860276">
    <property type="pathway name" value="SLC15A4:TASL-dependent IRF5 activation"/>
</dbReference>
<dbReference type="BioGRID-ORCS" id="71398">
    <property type="hits" value="2 hits in 75 CRISPR screens"/>
</dbReference>
<dbReference type="PRO" id="PR:Q9D3J9"/>
<dbReference type="Proteomes" id="UP000000589">
    <property type="component" value="Chromosome X"/>
</dbReference>
<dbReference type="RNAct" id="Q9D3J9">
    <property type="molecule type" value="protein"/>
</dbReference>
<dbReference type="Bgee" id="ENSMUSG00000025058">
    <property type="expression patterns" value="Expressed in granulocyte and 25 other cell types or tissues"/>
</dbReference>
<dbReference type="ExpressionAtlas" id="Q9D3J9">
    <property type="expression patterns" value="baseline and differential"/>
</dbReference>
<dbReference type="GO" id="GO:0005829">
    <property type="term" value="C:cytosol"/>
    <property type="evidence" value="ECO:0007669"/>
    <property type="project" value="Ensembl"/>
</dbReference>
<dbReference type="GO" id="GO:0036020">
    <property type="term" value="C:endolysosome membrane"/>
    <property type="evidence" value="ECO:0000250"/>
    <property type="project" value="UniProtKB"/>
</dbReference>
<dbReference type="GO" id="GO:0005654">
    <property type="term" value="C:nucleoplasm"/>
    <property type="evidence" value="ECO:0007669"/>
    <property type="project" value="Ensembl"/>
</dbReference>
<dbReference type="GO" id="GO:0045087">
    <property type="term" value="P:innate immune response"/>
    <property type="evidence" value="ECO:0007669"/>
    <property type="project" value="UniProtKB-KW"/>
</dbReference>
<dbReference type="GO" id="GO:0045089">
    <property type="term" value="P:positive regulation of innate immune response"/>
    <property type="evidence" value="ECO:0000250"/>
    <property type="project" value="UniProtKB"/>
</dbReference>
<dbReference type="GO" id="GO:0034157">
    <property type="term" value="P:positive regulation of toll-like receptor 7 signaling pathway"/>
    <property type="evidence" value="ECO:0000250"/>
    <property type="project" value="UniProtKB"/>
</dbReference>
<dbReference type="GO" id="GO:0034161">
    <property type="term" value="P:positive regulation of toll-like receptor 8 signaling pathway"/>
    <property type="evidence" value="ECO:0000250"/>
    <property type="project" value="UniProtKB"/>
</dbReference>
<dbReference type="GO" id="GO:0035751">
    <property type="term" value="P:regulation of lysosomal lumen pH"/>
    <property type="evidence" value="ECO:0000250"/>
    <property type="project" value="UniProtKB"/>
</dbReference>
<dbReference type="GO" id="GO:0034121">
    <property type="term" value="P:regulation of toll-like receptor signaling pathway"/>
    <property type="evidence" value="ECO:0007669"/>
    <property type="project" value="InterPro"/>
</dbReference>
<dbReference type="InterPro" id="IPR027869">
    <property type="entry name" value="TASL"/>
</dbReference>
<dbReference type="PANTHER" id="PTHR14889">
    <property type="entry name" value="RCG36411"/>
    <property type="match status" value="1"/>
</dbReference>
<dbReference type="PANTHER" id="PTHR14889:SF3">
    <property type="entry name" value="TLR ADAPTER INTERACTING WITH SLC15A4 ON THE LYSOSOME"/>
    <property type="match status" value="1"/>
</dbReference>
<dbReference type="Pfam" id="PF15133">
    <property type="entry name" value="TASL"/>
    <property type="match status" value="1"/>
</dbReference>
<organism>
    <name type="scientific">Mus musculus</name>
    <name type="common">Mouse</name>
    <dbReference type="NCBI Taxonomy" id="10090"/>
    <lineage>
        <taxon>Eukaryota</taxon>
        <taxon>Metazoa</taxon>
        <taxon>Chordata</taxon>
        <taxon>Craniata</taxon>
        <taxon>Vertebrata</taxon>
        <taxon>Euteleostomi</taxon>
        <taxon>Mammalia</taxon>
        <taxon>Eutheria</taxon>
        <taxon>Euarchontoglires</taxon>
        <taxon>Glires</taxon>
        <taxon>Rodentia</taxon>
        <taxon>Myomorpha</taxon>
        <taxon>Muroidea</taxon>
        <taxon>Muridae</taxon>
        <taxon>Murinae</taxon>
        <taxon>Mus</taxon>
        <taxon>Mus</taxon>
    </lineage>
</organism>